<accession>Q477G6</accession>
<protein>
    <recommendedName>
        <fullName evidence="1">Octanoyltransferase</fullName>
        <ecNumber evidence="1">2.3.1.181</ecNumber>
    </recommendedName>
    <alternativeName>
        <fullName evidence="1">Lipoate-protein ligase B</fullName>
    </alternativeName>
    <alternativeName>
        <fullName evidence="1">Lipoyl/octanoyl transferase</fullName>
    </alternativeName>
    <alternativeName>
        <fullName evidence="1">Octanoyl-[acyl-carrier-protein]-protein N-octanoyltransferase</fullName>
    </alternativeName>
</protein>
<name>LIPB_CUPPJ</name>
<dbReference type="EC" id="2.3.1.181" evidence="1"/>
<dbReference type="EMBL" id="CP000090">
    <property type="protein sequence ID" value="AAZ59467.1"/>
    <property type="molecule type" value="Genomic_DNA"/>
</dbReference>
<dbReference type="SMR" id="Q477G6"/>
<dbReference type="STRING" id="264198.Reut_A0085"/>
<dbReference type="KEGG" id="reu:Reut_A0085"/>
<dbReference type="eggNOG" id="COG0321">
    <property type="taxonomic scope" value="Bacteria"/>
</dbReference>
<dbReference type="HOGENOM" id="CLU_035168_3_1_4"/>
<dbReference type="UniPathway" id="UPA00538">
    <property type="reaction ID" value="UER00592"/>
</dbReference>
<dbReference type="GO" id="GO:0005737">
    <property type="term" value="C:cytoplasm"/>
    <property type="evidence" value="ECO:0007669"/>
    <property type="project" value="UniProtKB-SubCell"/>
</dbReference>
<dbReference type="GO" id="GO:0033819">
    <property type="term" value="F:lipoyl(octanoyl) transferase activity"/>
    <property type="evidence" value="ECO:0007669"/>
    <property type="project" value="UniProtKB-EC"/>
</dbReference>
<dbReference type="GO" id="GO:0036211">
    <property type="term" value="P:protein modification process"/>
    <property type="evidence" value="ECO:0007669"/>
    <property type="project" value="InterPro"/>
</dbReference>
<dbReference type="CDD" id="cd16444">
    <property type="entry name" value="LipB"/>
    <property type="match status" value="1"/>
</dbReference>
<dbReference type="FunFam" id="3.30.930.10:FF:000020">
    <property type="entry name" value="Octanoyltransferase"/>
    <property type="match status" value="1"/>
</dbReference>
<dbReference type="Gene3D" id="3.30.930.10">
    <property type="entry name" value="Bira Bifunctional Protein, Domain 2"/>
    <property type="match status" value="1"/>
</dbReference>
<dbReference type="HAMAP" id="MF_00013">
    <property type="entry name" value="LipB"/>
    <property type="match status" value="1"/>
</dbReference>
<dbReference type="InterPro" id="IPR045864">
    <property type="entry name" value="aa-tRNA-synth_II/BPL/LPL"/>
</dbReference>
<dbReference type="InterPro" id="IPR004143">
    <property type="entry name" value="BPL_LPL_catalytic"/>
</dbReference>
<dbReference type="InterPro" id="IPR000544">
    <property type="entry name" value="Octanoyltransferase"/>
</dbReference>
<dbReference type="InterPro" id="IPR020605">
    <property type="entry name" value="Octanoyltransferase_CS"/>
</dbReference>
<dbReference type="NCBIfam" id="TIGR00214">
    <property type="entry name" value="lipB"/>
    <property type="match status" value="1"/>
</dbReference>
<dbReference type="NCBIfam" id="NF010922">
    <property type="entry name" value="PRK14342.1"/>
    <property type="match status" value="1"/>
</dbReference>
<dbReference type="NCBIfam" id="NF010923">
    <property type="entry name" value="PRK14343.1"/>
    <property type="match status" value="1"/>
</dbReference>
<dbReference type="PANTHER" id="PTHR10993:SF7">
    <property type="entry name" value="LIPOYLTRANSFERASE 2, MITOCHONDRIAL-RELATED"/>
    <property type="match status" value="1"/>
</dbReference>
<dbReference type="PANTHER" id="PTHR10993">
    <property type="entry name" value="OCTANOYLTRANSFERASE"/>
    <property type="match status" value="1"/>
</dbReference>
<dbReference type="Pfam" id="PF21948">
    <property type="entry name" value="LplA-B_cat"/>
    <property type="match status" value="1"/>
</dbReference>
<dbReference type="SUPFAM" id="SSF55681">
    <property type="entry name" value="Class II aaRS and biotin synthetases"/>
    <property type="match status" value="1"/>
</dbReference>
<dbReference type="PROSITE" id="PS51733">
    <property type="entry name" value="BPL_LPL_CATALYTIC"/>
    <property type="match status" value="1"/>
</dbReference>
<dbReference type="PROSITE" id="PS01313">
    <property type="entry name" value="LIPB"/>
    <property type="match status" value="1"/>
</dbReference>
<sequence length="253" mass="27249">MTGAGPAQAGPFRYTLAMHPIQVIERGREDYQPCFDAMRAFTVARTPETPDQVWLVEHPPVYTLGQAGDPAHLLAPDERIPMVQIDRGGQITYHGPGQVVAYLLLDLKRRKLMVRELVNDIEQAVLDTLAAYNLAAERKPGAPGIYLSDGPHRGAKIAALGLKIRNGCSYHGVSLNVQMDLAPFLRINPCGYAGLETVDMATAGGHWQDQPVTAAQQPDIARRLAAALCEVLAAREARALAADKTAATPALAS</sequence>
<evidence type="ECO:0000255" key="1">
    <source>
        <dbReference type="HAMAP-Rule" id="MF_00013"/>
    </source>
</evidence>
<evidence type="ECO:0000255" key="2">
    <source>
        <dbReference type="PROSITE-ProRule" id="PRU01067"/>
    </source>
</evidence>
<feature type="chain" id="PRO_0000242752" description="Octanoyltransferase">
    <location>
        <begin position="1"/>
        <end position="253"/>
    </location>
</feature>
<feature type="domain" description="BPL/LPL catalytic" evidence="2">
    <location>
        <begin position="47"/>
        <end position="236"/>
    </location>
</feature>
<feature type="active site" description="Acyl-thioester intermediate" evidence="1">
    <location>
        <position position="190"/>
    </location>
</feature>
<feature type="binding site" evidence="1">
    <location>
        <begin position="87"/>
        <end position="94"/>
    </location>
    <ligand>
        <name>substrate</name>
    </ligand>
</feature>
<feature type="binding site" evidence="1">
    <location>
        <begin position="159"/>
        <end position="161"/>
    </location>
    <ligand>
        <name>substrate</name>
    </ligand>
</feature>
<feature type="binding site" evidence="1">
    <location>
        <begin position="172"/>
        <end position="174"/>
    </location>
    <ligand>
        <name>substrate</name>
    </ligand>
</feature>
<feature type="site" description="Lowers pKa of active site Cys" evidence="1">
    <location>
        <position position="156"/>
    </location>
</feature>
<keyword id="KW-0012">Acyltransferase</keyword>
<keyword id="KW-0963">Cytoplasm</keyword>
<keyword id="KW-0808">Transferase</keyword>
<reference key="1">
    <citation type="journal article" date="2010" name="PLoS ONE">
        <title>The complete multipartite genome sequence of Cupriavidus necator JMP134, a versatile pollutant degrader.</title>
        <authorList>
            <person name="Lykidis A."/>
            <person name="Perez-Pantoja D."/>
            <person name="Ledger T."/>
            <person name="Mavromatis K."/>
            <person name="Anderson I.J."/>
            <person name="Ivanova N.N."/>
            <person name="Hooper S.D."/>
            <person name="Lapidus A."/>
            <person name="Lucas S."/>
            <person name="Gonzalez B."/>
            <person name="Kyrpides N.C."/>
        </authorList>
    </citation>
    <scope>NUCLEOTIDE SEQUENCE [LARGE SCALE GENOMIC DNA]</scope>
    <source>
        <strain>JMP134 / LMG 1197</strain>
    </source>
</reference>
<organism>
    <name type="scientific">Cupriavidus pinatubonensis (strain JMP 134 / LMG 1197)</name>
    <name type="common">Cupriavidus necator (strain JMP 134)</name>
    <dbReference type="NCBI Taxonomy" id="264198"/>
    <lineage>
        <taxon>Bacteria</taxon>
        <taxon>Pseudomonadati</taxon>
        <taxon>Pseudomonadota</taxon>
        <taxon>Betaproteobacteria</taxon>
        <taxon>Burkholderiales</taxon>
        <taxon>Burkholderiaceae</taxon>
        <taxon>Cupriavidus</taxon>
    </lineage>
</organism>
<proteinExistence type="inferred from homology"/>
<comment type="function">
    <text evidence="1">Catalyzes the transfer of endogenously produced octanoic acid from octanoyl-acyl-carrier-protein onto the lipoyl domains of lipoate-dependent enzymes. Lipoyl-ACP can also act as a substrate although octanoyl-ACP is likely to be the physiological substrate.</text>
</comment>
<comment type="catalytic activity">
    <reaction evidence="1">
        <text>octanoyl-[ACP] + L-lysyl-[protein] = N(6)-octanoyl-L-lysyl-[protein] + holo-[ACP] + H(+)</text>
        <dbReference type="Rhea" id="RHEA:17665"/>
        <dbReference type="Rhea" id="RHEA-COMP:9636"/>
        <dbReference type="Rhea" id="RHEA-COMP:9685"/>
        <dbReference type="Rhea" id="RHEA-COMP:9752"/>
        <dbReference type="Rhea" id="RHEA-COMP:9928"/>
        <dbReference type="ChEBI" id="CHEBI:15378"/>
        <dbReference type="ChEBI" id="CHEBI:29969"/>
        <dbReference type="ChEBI" id="CHEBI:64479"/>
        <dbReference type="ChEBI" id="CHEBI:78463"/>
        <dbReference type="ChEBI" id="CHEBI:78809"/>
        <dbReference type="EC" id="2.3.1.181"/>
    </reaction>
</comment>
<comment type="pathway">
    <text evidence="1">Protein modification; protein lipoylation via endogenous pathway; protein N(6)-(lipoyl)lysine from octanoyl-[acyl-carrier-protein]: step 1/2.</text>
</comment>
<comment type="subcellular location">
    <subcellularLocation>
        <location evidence="1">Cytoplasm</location>
    </subcellularLocation>
</comment>
<comment type="miscellaneous">
    <text evidence="1">In the reaction, the free carboxyl group of octanoic acid is attached via an amide linkage to the epsilon-amino group of a specific lysine residue of lipoyl domains of lipoate-dependent enzymes.</text>
</comment>
<comment type="similarity">
    <text evidence="1">Belongs to the LipB family.</text>
</comment>
<gene>
    <name evidence="1" type="primary">lipB</name>
    <name type="ordered locus">Reut_A0085</name>
</gene>